<gene>
    <name evidence="1" type="primary">thiG</name>
    <name type="ordered locus">MUL_2803</name>
</gene>
<sequence length="264" mass="26960">MVESKLMIADRSFASRLIMGTGGASNLAVLQEALVASGTELTTVAIRRVDAEGGTGLLDLLNRLGITPLPNTAGCRSAAEAVLTAQLAREALATNWVKLEVIADERTLLPDAIELVRAAEQLVDDGFVVLPYTNDDPVLARRLEDTGCAAVMPLGSPIGTGLGITNPHNIEMIVASAGVPVVLDAGIGTASDAALAMELGCDALLLATAVTRAADPAAMAAAMSAAVTAGYLARCAGRIPKRFWAQASSPTLVTTQSPGAESGN</sequence>
<accession>A0PRX9</accession>
<feature type="chain" id="PRO_1000026015" description="Thiazole synthase">
    <location>
        <begin position="1"/>
        <end position="264"/>
    </location>
</feature>
<feature type="active site" description="Schiff-base intermediate with DXP" evidence="1">
    <location>
        <position position="98"/>
    </location>
</feature>
<feature type="binding site" evidence="1">
    <location>
        <position position="159"/>
    </location>
    <ligand>
        <name>1-deoxy-D-xylulose 5-phosphate</name>
        <dbReference type="ChEBI" id="CHEBI:57792"/>
    </ligand>
</feature>
<feature type="binding site" evidence="1">
    <location>
        <begin position="185"/>
        <end position="186"/>
    </location>
    <ligand>
        <name>1-deoxy-D-xylulose 5-phosphate</name>
        <dbReference type="ChEBI" id="CHEBI:57792"/>
    </ligand>
</feature>
<feature type="binding site" evidence="1">
    <location>
        <begin position="207"/>
        <end position="208"/>
    </location>
    <ligand>
        <name>1-deoxy-D-xylulose 5-phosphate</name>
        <dbReference type="ChEBI" id="CHEBI:57792"/>
    </ligand>
</feature>
<name>THIG_MYCUA</name>
<comment type="function">
    <text evidence="1">Catalyzes the rearrangement of 1-deoxy-D-xylulose 5-phosphate (DXP) to produce the thiazole phosphate moiety of thiamine. Sulfur is provided by the thiocarboxylate moiety of the carrier protein ThiS. In vitro, sulfur can be provided by H(2)S.</text>
</comment>
<comment type="catalytic activity">
    <reaction evidence="1">
        <text>[ThiS sulfur-carrier protein]-C-terminal-Gly-aminoethanethioate + 2-iminoacetate + 1-deoxy-D-xylulose 5-phosphate = [ThiS sulfur-carrier protein]-C-terminal Gly-Gly + 2-[(2R,5Z)-2-carboxy-4-methylthiazol-5(2H)-ylidene]ethyl phosphate + 2 H2O + H(+)</text>
        <dbReference type="Rhea" id="RHEA:26297"/>
        <dbReference type="Rhea" id="RHEA-COMP:12909"/>
        <dbReference type="Rhea" id="RHEA-COMP:19908"/>
        <dbReference type="ChEBI" id="CHEBI:15377"/>
        <dbReference type="ChEBI" id="CHEBI:15378"/>
        <dbReference type="ChEBI" id="CHEBI:57792"/>
        <dbReference type="ChEBI" id="CHEBI:62899"/>
        <dbReference type="ChEBI" id="CHEBI:77846"/>
        <dbReference type="ChEBI" id="CHEBI:90778"/>
        <dbReference type="ChEBI" id="CHEBI:232372"/>
        <dbReference type="EC" id="2.8.1.10"/>
    </reaction>
</comment>
<comment type="pathway">
    <text evidence="1">Cofactor biosynthesis; thiamine diphosphate biosynthesis.</text>
</comment>
<comment type="subunit">
    <text evidence="1">Homotetramer. Forms heterodimers with either ThiH or ThiS.</text>
</comment>
<comment type="subcellular location">
    <subcellularLocation>
        <location evidence="1">Cytoplasm</location>
    </subcellularLocation>
</comment>
<comment type="similarity">
    <text evidence="1">Belongs to the ThiG family.</text>
</comment>
<protein>
    <recommendedName>
        <fullName evidence="1">Thiazole synthase</fullName>
        <ecNumber evidence="1">2.8.1.10</ecNumber>
    </recommendedName>
</protein>
<proteinExistence type="inferred from homology"/>
<dbReference type="EC" id="2.8.1.10" evidence="1"/>
<dbReference type="EMBL" id="CP000325">
    <property type="protein sequence ID" value="ABL05098.1"/>
    <property type="molecule type" value="Genomic_DNA"/>
</dbReference>
<dbReference type="RefSeq" id="WP_011740712.1">
    <property type="nucleotide sequence ID" value="NC_008611.1"/>
</dbReference>
<dbReference type="SMR" id="A0PRX9"/>
<dbReference type="KEGG" id="mul:MUL_2803"/>
<dbReference type="eggNOG" id="COG2022">
    <property type="taxonomic scope" value="Bacteria"/>
</dbReference>
<dbReference type="HOGENOM" id="CLU_062233_1_0_11"/>
<dbReference type="UniPathway" id="UPA00060"/>
<dbReference type="Proteomes" id="UP000000765">
    <property type="component" value="Chromosome"/>
</dbReference>
<dbReference type="GO" id="GO:0005737">
    <property type="term" value="C:cytoplasm"/>
    <property type="evidence" value="ECO:0007669"/>
    <property type="project" value="UniProtKB-SubCell"/>
</dbReference>
<dbReference type="GO" id="GO:1990107">
    <property type="term" value="F:thiazole synthase activity"/>
    <property type="evidence" value="ECO:0007669"/>
    <property type="project" value="UniProtKB-EC"/>
</dbReference>
<dbReference type="GO" id="GO:0009229">
    <property type="term" value="P:thiamine diphosphate biosynthetic process"/>
    <property type="evidence" value="ECO:0007669"/>
    <property type="project" value="UniProtKB-UniRule"/>
</dbReference>
<dbReference type="CDD" id="cd04728">
    <property type="entry name" value="ThiG"/>
    <property type="match status" value="1"/>
</dbReference>
<dbReference type="Gene3D" id="3.20.20.70">
    <property type="entry name" value="Aldolase class I"/>
    <property type="match status" value="1"/>
</dbReference>
<dbReference type="HAMAP" id="MF_00443">
    <property type="entry name" value="ThiG"/>
    <property type="match status" value="1"/>
</dbReference>
<dbReference type="InterPro" id="IPR013785">
    <property type="entry name" value="Aldolase_TIM"/>
</dbReference>
<dbReference type="InterPro" id="IPR033983">
    <property type="entry name" value="Thiazole_synthase_ThiG"/>
</dbReference>
<dbReference type="InterPro" id="IPR008867">
    <property type="entry name" value="ThiG"/>
</dbReference>
<dbReference type="PANTHER" id="PTHR34266">
    <property type="entry name" value="THIAZOLE SYNTHASE"/>
    <property type="match status" value="1"/>
</dbReference>
<dbReference type="PANTHER" id="PTHR34266:SF2">
    <property type="entry name" value="THIAZOLE SYNTHASE"/>
    <property type="match status" value="1"/>
</dbReference>
<dbReference type="Pfam" id="PF05690">
    <property type="entry name" value="ThiG"/>
    <property type="match status" value="1"/>
</dbReference>
<dbReference type="SUPFAM" id="SSF110399">
    <property type="entry name" value="ThiG-like"/>
    <property type="match status" value="1"/>
</dbReference>
<organism>
    <name type="scientific">Mycobacterium ulcerans (strain Agy99)</name>
    <dbReference type="NCBI Taxonomy" id="362242"/>
    <lineage>
        <taxon>Bacteria</taxon>
        <taxon>Bacillati</taxon>
        <taxon>Actinomycetota</taxon>
        <taxon>Actinomycetes</taxon>
        <taxon>Mycobacteriales</taxon>
        <taxon>Mycobacteriaceae</taxon>
        <taxon>Mycobacterium</taxon>
        <taxon>Mycobacterium ulcerans group</taxon>
    </lineage>
</organism>
<evidence type="ECO:0000255" key="1">
    <source>
        <dbReference type="HAMAP-Rule" id="MF_00443"/>
    </source>
</evidence>
<reference key="1">
    <citation type="journal article" date="2007" name="Genome Res.">
        <title>Reductive evolution and niche adaptation inferred from the genome of Mycobacterium ulcerans, the causative agent of Buruli ulcer.</title>
        <authorList>
            <person name="Stinear T.P."/>
            <person name="Seemann T."/>
            <person name="Pidot S."/>
            <person name="Frigui W."/>
            <person name="Reysset G."/>
            <person name="Garnier T."/>
            <person name="Meurice G."/>
            <person name="Simon D."/>
            <person name="Bouchier C."/>
            <person name="Ma L."/>
            <person name="Tichit M."/>
            <person name="Porter J.L."/>
            <person name="Ryan J."/>
            <person name="Johnson P.D.R."/>
            <person name="Davies J.K."/>
            <person name="Jenkin G.A."/>
            <person name="Small P.L.C."/>
            <person name="Jones L.M."/>
            <person name="Tekaia F."/>
            <person name="Laval F."/>
            <person name="Daffe M."/>
            <person name="Parkhill J."/>
            <person name="Cole S.T."/>
        </authorList>
    </citation>
    <scope>NUCLEOTIDE SEQUENCE [LARGE SCALE GENOMIC DNA]</scope>
    <source>
        <strain>Agy99</strain>
    </source>
</reference>
<keyword id="KW-0963">Cytoplasm</keyword>
<keyword id="KW-0704">Schiff base</keyword>
<keyword id="KW-0784">Thiamine biosynthesis</keyword>
<keyword id="KW-0808">Transferase</keyword>